<protein>
    <recommendedName>
        <fullName>Uncharacterized protein 160L</fullName>
    </recommendedName>
</protein>
<dbReference type="EMBL" id="AF303741">
    <property type="protein sequence ID" value="AAB94469.1"/>
    <property type="molecule type" value="Genomic_DNA"/>
</dbReference>
<dbReference type="PIR" id="T03171">
    <property type="entry name" value="T03171"/>
</dbReference>
<dbReference type="RefSeq" id="NP_149623.1">
    <property type="nucleotide sequence ID" value="NC_003038.1"/>
</dbReference>
<dbReference type="KEGG" id="vg:1733263"/>
<dbReference type="Proteomes" id="UP000001359">
    <property type="component" value="Genome"/>
</dbReference>
<proteinExistence type="inferred from homology"/>
<name>160L_IIV6</name>
<feature type="signal peptide" evidence="1">
    <location>
        <begin position="1"/>
        <end position="23"/>
    </location>
</feature>
<feature type="chain" id="PRO_0000378016" description="Uncharacterized protein 160L">
    <location>
        <begin position="24"/>
        <end position="53"/>
    </location>
</feature>
<gene>
    <name type="ORF">IIV6-160L</name>
</gene>
<keyword id="KW-1185">Reference proteome</keyword>
<keyword id="KW-0732">Signal</keyword>
<organismHost>
    <name type="scientific">Acheta domesticus</name>
    <name type="common">House cricket</name>
    <dbReference type="NCBI Taxonomy" id="6997"/>
</organismHost>
<organismHost>
    <name type="scientific">Chilo suppressalis</name>
    <name type="common">Asiatic rice borer moth</name>
    <dbReference type="NCBI Taxonomy" id="168631"/>
</organismHost>
<organismHost>
    <name type="scientific">Gryllus bimaculatus</name>
    <name type="common">Two-spotted cricket</name>
    <dbReference type="NCBI Taxonomy" id="6999"/>
</organismHost>
<organismHost>
    <name type="scientific">Gryllus campestris</name>
    <dbReference type="NCBI Taxonomy" id="58607"/>
</organismHost>
<organismHost>
    <name type="scientific">Spodoptera frugiperda</name>
    <name type="common">Fall armyworm</name>
    <dbReference type="NCBI Taxonomy" id="7108"/>
</organismHost>
<organism>
    <name type="scientific">Invertebrate iridescent virus 6</name>
    <name type="common">IIV-6</name>
    <name type="synonym">Chilo iridescent virus</name>
    <dbReference type="NCBI Taxonomy" id="176652"/>
    <lineage>
        <taxon>Viruses</taxon>
        <taxon>Varidnaviria</taxon>
        <taxon>Bamfordvirae</taxon>
        <taxon>Nucleocytoviricota</taxon>
        <taxon>Megaviricetes</taxon>
        <taxon>Pimascovirales</taxon>
        <taxon>Iridoviridae</taxon>
        <taxon>Betairidovirinae</taxon>
        <taxon>Iridovirus</taxon>
    </lineage>
</organism>
<sequence length="53" mass="5869">MSILLKILFKLLLLILSITFVITDCLPRSCASFGCCSGNCATWCDQCDIKYSC</sequence>
<accession>O55758</accession>
<reference key="1">
    <citation type="journal article" date="2001" name="Virology">
        <title>Analysis of the first complete DNA sequence of an invertebrate iridovirus: coding strategy of the genome of Chilo iridescent virus.</title>
        <authorList>
            <person name="Jakob N.J."/>
            <person name="Mueller K."/>
            <person name="Bahr U."/>
            <person name="Darai G."/>
        </authorList>
    </citation>
    <scope>NUCLEOTIDE SEQUENCE [LARGE SCALE GENOMIC DNA]</scope>
</reference>
<reference key="2">
    <citation type="journal article" date="2007" name="Virol. J.">
        <title>Comparative genomic analysis of the family Iridoviridae: re-annotating and defining the core set of iridovirus genes.</title>
        <authorList>
            <person name="Eaton H.E."/>
            <person name="Metcalf J."/>
            <person name="Penny E."/>
            <person name="Tcherepanov V."/>
            <person name="Upton C."/>
            <person name="Brunetti C.R."/>
        </authorList>
    </citation>
    <scope>GENOME REANNOTATION</scope>
</reference>
<evidence type="ECO:0000255" key="1"/>